<evidence type="ECO:0000255" key="1">
    <source>
        <dbReference type="HAMAP-Rule" id="MF_00189"/>
    </source>
</evidence>
<keyword id="KW-0997">Cell inner membrane</keyword>
<keyword id="KW-1003">Cell membrane</keyword>
<keyword id="KW-0472">Membrane</keyword>
<keyword id="KW-0812">Transmembrane</keyword>
<keyword id="KW-1133">Transmembrane helix</keyword>
<sequence length="185" mass="21163">MKQLLDFIPLILFFITYKLGGVREAAIVLVVATILQIVILKWKYGIVEKQQKIMASAVVFFGLLTAYFNEIRYLQWKVTIINGLFAIVLLVAQFQFKTPLIKKLLGKELQLPEKAWNTLNLGWALFFIICMLVNIYISHNMSEEAWVDFKSFGIIGMTVIATIISGVYIYRYLPKDGSNSKDGEK</sequence>
<dbReference type="EMBL" id="CP000057">
    <property type="protein sequence ID" value="AAX87873.1"/>
    <property type="molecule type" value="Genomic_DNA"/>
</dbReference>
<dbReference type="RefSeq" id="WP_011272232.1">
    <property type="nucleotide sequence ID" value="NC_007146.2"/>
</dbReference>
<dbReference type="KEGG" id="hit:NTHI0991"/>
<dbReference type="HOGENOM" id="CLU_089554_2_0_6"/>
<dbReference type="Proteomes" id="UP000002525">
    <property type="component" value="Chromosome"/>
</dbReference>
<dbReference type="GO" id="GO:0005886">
    <property type="term" value="C:plasma membrane"/>
    <property type="evidence" value="ECO:0007669"/>
    <property type="project" value="UniProtKB-SubCell"/>
</dbReference>
<dbReference type="HAMAP" id="MF_00189">
    <property type="entry name" value="YciB"/>
    <property type="match status" value="1"/>
</dbReference>
<dbReference type="InterPro" id="IPR006008">
    <property type="entry name" value="YciB"/>
</dbReference>
<dbReference type="NCBIfam" id="TIGR00997">
    <property type="entry name" value="ispZ"/>
    <property type="match status" value="1"/>
</dbReference>
<dbReference type="NCBIfam" id="NF001324">
    <property type="entry name" value="PRK00259.1-2"/>
    <property type="match status" value="1"/>
</dbReference>
<dbReference type="PANTHER" id="PTHR36917:SF1">
    <property type="entry name" value="INNER MEMBRANE-SPANNING PROTEIN YCIB"/>
    <property type="match status" value="1"/>
</dbReference>
<dbReference type="PANTHER" id="PTHR36917">
    <property type="entry name" value="INTRACELLULAR SEPTATION PROTEIN A-RELATED"/>
    <property type="match status" value="1"/>
</dbReference>
<dbReference type="Pfam" id="PF04279">
    <property type="entry name" value="IspA"/>
    <property type="match status" value="1"/>
</dbReference>
<comment type="function">
    <text evidence="1">Plays a role in cell envelope biogenesis, maintenance of cell envelope integrity and membrane homeostasis.</text>
</comment>
<comment type="subcellular location">
    <subcellularLocation>
        <location evidence="1">Cell inner membrane</location>
        <topology evidence="1">Multi-pass membrane protein</topology>
    </subcellularLocation>
</comment>
<comment type="similarity">
    <text evidence="1">Belongs to the YciB family.</text>
</comment>
<protein>
    <recommendedName>
        <fullName evidence="1">Inner membrane-spanning protein YciB</fullName>
    </recommendedName>
</protein>
<organism>
    <name type="scientific">Haemophilus influenzae (strain 86-028NP)</name>
    <dbReference type="NCBI Taxonomy" id="281310"/>
    <lineage>
        <taxon>Bacteria</taxon>
        <taxon>Pseudomonadati</taxon>
        <taxon>Pseudomonadota</taxon>
        <taxon>Gammaproteobacteria</taxon>
        <taxon>Pasteurellales</taxon>
        <taxon>Pasteurellaceae</taxon>
        <taxon>Haemophilus</taxon>
    </lineage>
</organism>
<reference key="1">
    <citation type="journal article" date="2005" name="J. Bacteriol.">
        <title>Genomic sequence of an otitis media isolate of nontypeable Haemophilus influenzae: comparative study with H. influenzae serotype d, strain KW20.</title>
        <authorList>
            <person name="Harrison A."/>
            <person name="Dyer D.W."/>
            <person name="Gillaspy A."/>
            <person name="Ray W.C."/>
            <person name="Mungur R."/>
            <person name="Carson M.B."/>
            <person name="Zhong H."/>
            <person name="Gipson J."/>
            <person name="Gipson M."/>
            <person name="Johnson L.S."/>
            <person name="Lewis L."/>
            <person name="Bakaletz L.O."/>
            <person name="Munson R.S. Jr."/>
        </authorList>
    </citation>
    <scope>NUCLEOTIDE SEQUENCE [LARGE SCALE GENOMIC DNA]</scope>
    <source>
        <strain>86-028NP</strain>
    </source>
</reference>
<name>YCIB_HAEI8</name>
<proteinExistence type="inferred from homology"/>
<accession>Q4QM74</accession>
<feature type="chain" id="PRO_1000021014" description="Inner membrane-spanning protein YciB">
    <location>
        <begin position="1"/>
        <end position="185"/>
    </location>
</feature>
<feature type="transmembrane region" description="Helical" evidence="1">
    <location>
        <begin position="27"/>
        <end position="47"/>
    </location>
</feature>
<feature type="transmembrane region" description="Helical" evidence="1">
    <location>
        <begin position="53"/>
        <end position="73"/>
    </location>
</feature>
<feature type="transmembrane region" description="Helical" evidence="1">
    <location>
        <begin position="76"/>
        <end position="96"/>
    </location>
</feature>
<feature type="transmembrane region" description="Helical" evidence="1">
    <location>
        <begin position="118"/>
        <end position="138"/>
    </location>
</feature>
<feature type="transmembrane region" description="Helical" evidence="1">
    <location>
        <begin position="149"/>
        <end position="169"/>
    </location>
</feature>
<gene>
    <name evidence="1" type="primary">yciB</name>
    <name type="ordered locus">NTHI0991</name>
</gene>